<accession>B1KL05</accession>
<sequence length="225" mass="24916">MGIKDWPDGEGPRDRLIKFGVSQLSDAEVLAVLLRNGSQGLNAVELARNLINEFGGLREVLAASQSQVCRLSGMGPVKFAQLRAAVELSSRVSAQNLKRGKILSDPDLTRDYLMRQLRDRAYEVFAILLLDSQHRVIQFVELFRGTIDSASVYPRDVVSLVLEKKAAAVIVCHNHPSGVAEPSHADRRITERLKCALSTIDVSLLDHMVVGDREIVSFAERGWID</sequence>
<proteinExistence type="inferred from homology"/>
<organism>
    <name type="scientific">Shewanella woodyi (strain ATCC 51908 / MS32)</name>
    <dbReference type="NCBI Taxonomy" id="392500"/>
    <lineage>
        <taxon>Bacteria</taxon>
        <taxon>Pseudomonadati</taxon>
        <taxon>Pseudomonadota</taxon>
        <taxon>Gammaproteobacteria</taxon>
        <taxon>Alteromonadales</taxon>
        <taxon>Shewanellaceae</taxon>
        <taxon>Shewanella</taxon>
    </lineage>
</organism>
<keyword id="KW-0378">Hydrolase</keyword>
<keyword id="KW-0479">Metal-binding</keyword>
<keyword id="KW-0482">Metalloprotease</keyword>
<keyword id="KW-0645">Protease</keyword>
<keyword id="KW-1185">Reference proteome</keyword>
<keyword id="KW-0862">Zinc</keyword>
<gene>
    <name type="ordered locus">Swoo_4561</name>
</gene>
<protein>
    <recommendedName>
        <fullName>UPF0758 protein Swoo_4561</fullName>
    </recommendedName>
</protein>
<name>Y4561_SHEWM</name>
<comment type="similarity">
    <text evidence="2">Belongs to the UPF0758 family.</text>
</comment>
<evidence type="ECO:0000255" key="1">
    <source>
        <dbReference type="PROSITE-ProRule" id="PRU01182"/>
    </source>
</evidence>
<evidence type="ECO:0000305" key="2"/>
<reference key="1">
    <citation type="submission" date="2008-02" db="EMBL/GenBank/DDBJ databases">
        <title>Complete sequence of Shewanella woodyi ATCC 51908.</title>
        <authorList>
            <consortium name="US DOE Joint Genome Institute"/>
            <person name="Copeland A."/>
            <person name="Lucas S."/>
            <person name="Lapidus A."/>
            <person name="Glavina del Rio T."/>
            <person name="Dalin E."/>
            <person name="Tice H."/>
            <person name="Bruce D."/>
            <person name="Goodwin L."/>
            <person name="Pitluck S."/>
            <person name="Sims D."/>
            <person name="Brettin T."/>
            <person name="Detter J.C."/>
            <person name="Han C."/>
            <person name="Kuske C.R."/>
            <person name="Schmutz J."/>
            <person name="Larimer F."/>
            <person name="Land M."/>
            <person name="Hauser L."/>
            <person name="Kyrpides N."/>
            <person name="Lykidis A."/>
            <person name="Zhao J.-S."/>
            <person name="Richardson P."/>
        </authorList>
    </citation>
    <scope>NUCLEOTIDE SEQUENCE [LARGE SCALE GENOMIC DNA]</scope>
    <source>
        <strain>ATCC 51908 / MS32</strain>
    </source>
</reference>
<dbReference type="EMBL" id="CP000961">
    <property type="protein sequence ID" value="ACA88811.1"/>
    <property type="molecule type" value="Genomic_DNA"/>
</dbReference>
<dbReference type="RefSeq" id="WP_012327136.1">
    <property type="nucleotide sequence ID" value="NC_010506.1"/>
</dbReference>
<dbReference type="SMR" id="B1KL05"/>
<dbReference type="STRING" id="392500.Swoo_4561"/>
<dbReference type="KEGG" id="swd:Swoo_4561"/>
<dbReference type="eggNOG" id="COG2003">
    <property type="taxonomic scope" value="Bacteria"/>
</dbReference>
<dbReference type="HOGENOM" id="CLU_073529_0_1_6"/>
<dbReference type="Proteomes" id="UP000002168">
    <property type="component" value="Chromosome"/>
</dbReference>
<dbReference type="GO" id="GO:0046872">
    <property type="term" value="F:metal ion binding"/>
    <property type="evidence" value="ECO:0007669"/>
    <property type="project" value="UniProtKB-KW"/>
</dbReference>
<dbReference type="GO" id="GO:0008237">
    <property type="term" value="F:metallopeptidase activity"/>
    <property type="evidence" value="ECO:0007669"/>
    <property type="project" value="UniProtKB-KW"/>
</dbReference>
<dbReference type="GO" id="GO:0006508">
    <property type="term" value="P:proteolysis"/>
    <property type="evidence" value="ECO:0007669"/>
    <property type="project" value="UniProtKB-KW"/>
</dbReference>
<dbReference type="CDD" id="cd08071">
    <property type="entry name" value="MPN_DUF2466"/>
    <property type="match status" value="1"/>
</dbReference>
<dbReference type="FunFam" id="3.40.140.10:FF:000032">
    <property type="entry name" value="DNA repair protein RadC"/>
    <property type="match status" value="1"/>
</dbReference>
<dbReference type="Gene3D" id="1.10.150.20">
    <property type="entry name" value="5' to 3' exonuclease, C-terminal subdomain"/>
    <property type="match status" value="1"/>
</dbReference>
<dbReference type="Gene3D" id="3.40.140.10">
    <property type="entry name" value="Cytidine Deaminase, domain 2"/>
    <property type="match status" value="1"/>
</dbReference>
<dbReference type="InterPro" id="IPR037518">
    <property type="entry name" value="MPN"/>
</dbReference>
<dbReference type="InterPro" id="IPR025657">
    <property type="entry name" value="RadC_JAB"/>
</dbReference>
<dbReference type="InterPro" id="IPR010994">
    <property type="entry name" value="RuvA_2-like"/>
</dbReference>
<dbReference type="InterPro" id="IPR001405">
    <property type="entry name" value="UPF0758"/>
</dbReference>
<dbReference type="InterPro" id="IPR020891">
    <property type="entry name" value="UPF0758_CS"/>
</dbReference>
<dbReference type="InterPro" id="IPR046778">
    <property type="entry name" value="UPF0758_N"/>
</dbReference>
<dbReference type="NCBIfam" id="NF000642">
    <property type="entry name" value="PRK00024.1"/>
    <property type="match status" value="1"/>
</dbReference>
<dbReference type="NCBIfam" id="TIGR00608">
    <property type="entry name" value="radc"/>
    <property type="match status" value="1"/>
</dbReference>
<dbReference type="PANTHER" id="PTHR30471">
    <property type="entry name" value="DNA REPAIR PROTEIN RADC"/>
    <property type="match status" value="1"/>
</dbReference>
<dbReference type="PANTHER" id="PTHR30471:SF3">
    <property type="entry name" value="UPF0758 PROTEIN YEES-RELATED"/>
    <property type="match status" value="1"/>
</dbReference>
<dbReference type="Pfam" id="PF04002">
    <property type="entry name" value="RadC"/>
    <property type="match status" value="1"/>
</dbReference>
<dbReference type="Pfam" id="PF20582">
    <property type="entry name" value="UPF0758_N"/>
    <property type="match status" value="1"/>
</dbReference>
<dbReference type="SUPFAM" id="SSF102712">
    <property type="entry name" value="JAB1/MPN domain"/>
    <property type="match status" value="1"/>
</dbReference>
<dbReference type="SUPFAM" id="SSF47781">
    <property type="entry name" value="RuvA domain 2-like"/>
    <property type="match status" value="1"/>
</dbReference>
<dbReference type="PROSITE" id="PS50249">
    <property type="entry name" value="MPN"/>
    <property type="match status" value="1"/>
</dbReference>
<dbReference type="PROSITE" id="PS01302">
    <property type="entry name" value="UPF0758"/>
    <property type="match status" value="1"/>
</dbReference>
<feature type="chain" id="PRO_1000089846" description="UPF0758 protein Swoo_4561">
    <location>
        <begin position="1"/>
        <end position="225"/>
    </location>
</feature>
<feature type="domain" description="MPN" evidence="1">
    <location>
        <begin position="102"/>
        <end position="224"/>
    </location>
</feature>
<feature type="short sequence motif" description="JAMM motif" evidence="1">
    <location>
        <begin position="173"/>
        <end position="186"/>
    </location>
</feature>
<feature type="binding site" evidence="1">
    <location>
        <position position="173"/>
    </location>
    <ligand>
        <name>Zn(2+)</name>
        <dbReference type="ChEBI" id="CHEBI:29105"/>
        <note>catalytic</note>
    </ligand>
</feature>
<feature type="binding site" evidence="1">
    <location>
        <position position="175"/>
    </location>
    <ligand>
        <name>Zn(2+)</name>
        <dbReference type="ChEBI" id="CHEBI:29105"/>
        <note>catalytic</note>
    </ligand>
</feature>
<feature type="binding site" evidence="1">
    <location>
        <position position="186"/>
    </location>
    <ligand>
        <name>Zn(2+)</name>
        <dbReference type="ChEBI" id="CHEBI:29105"/>
        <note>catalytic</note>
    </ligand>
</feature>